<sequence length="969" mass="108637">MADDATTARDYRETVFLPDTPFPMRAGLPKKEPEILEGWAALSEKGLYGAVRQKRQAAGAPLFVFHDGPPYANGAIHIGHALNKILKDFVVRSRFALGYDVDYVPGWDCHGLPIEWKIEEQFRAKGRRKDEVPAEEFRRECRAYAGGWIEAQKTEFQRLGVLGDWWNRYATMDFTSEAKIVEEFHKFLATGQLYRGSKPVMWSPVERTALADAEIEYHDHVSPTIWVKFPVVQGSDAAVGAKLVIWTTTPWTIPANRAVSYNPDIPYSVFEVTALEEGLEFEPWAKPGDRLIIADKLAEDVFKAAKVASWKTVEAVDCEGMVLAHPLADLDSHYGYAVPMLAGDHVTDDAGTGFVHTAPGHGADDYQVWLAHGHREIPDTVDPDGAYYPHVALFAGLKVLETEGKKVGKFGPANGAVMEKLIEAGNLLARGRVEHSYPHSWRSKAPVIFRNTPQWFIRMDHAVDSLDGKTLREVAVQAIADTAFYPDGGRNRIGAMVETRPDWLISRQRNWGTPLAMFVDKHTGHPLNDPEVNARILAAIREGGADAWFTRPDADFLGAHDPAQYEKITDILDVWFDSGCTHAFTIEGRADSAWPADLYLEGSDQHRGWFQSSLLEGCGTRGRAPYKAVVTHGFTMDENGEKMSKSRGNTIEPQTITKESGAEILRLWTAMVDYQEDQRIGKTILATTTDAYRKLRNTMRYLLGALAGFDEEERVTDYDQFPALEKYILHRLWELDGQVREAYQSYRFSDVIRPLIEFCQGDLSALYFDVRRDSLYCDRPDALKRRAYRTALDYVFDRLTIWLAPLASFTMEEAWTTRFPEAGPVAYRVMPERVDAWRNDAEAARWAKVEKVTSVVTGALEVERREKRIGSALEAAPVVHFADEDLLAAFEGLDAGEVFRTSSATLVAGDAGAFRVDEVKGVSVDPNKAEGKKCARSWRILPEVGTDPRYPELSLRDADAVAYWDAGRG</sequence>
<protein>
    <recommendedName>
        <fullName evidence="1">Isoleucine--tRNA ligase</fullName>
        <ecNumber evidence="1">6.1.1.5</ecNumber>
    </recommendedName>
    <alternativeName>
        <fullName evidence="1">Isoleucyl-tRNA synthetase</fullName>
        <shortName evidence="1">IleRS</shortName>
    </alternativeName>
</protein>
<evidence type="ECO:0000255" key="1">
    <source>
        <dbReference type="HAMAP-Rule" id="MF_02002"/>
    </source>
</evidence>
<comment type="function">
    <text evidence="1">Catalyzes the attachment of isoleucine to tRNA(Ile). As IleRS can inadvertently accommodate and process structurally similar amino acids such as valine, to avoid such errors it has two additional distinct tRNA(Ile)-dependent editing activities. One activity is designated as 'pretransfer' editing and involves the hydrolysis of activated Val-AMP. The other activity is designated 'posttransfer' editing and involves deacylation of mischarged Val-tRNA(Ile).</text>
</comment>
<comment type="catalytic activity">
    <reaction evidence="1">
        <text>tRNA(Ile) + L-isoleucine + ATP = L-isoleucyl-tRNA(Ile) + AMP + diphosphate</text>
        <dbReference type="Rhea" id="RHEA:11060"/>
        <dbReference type="Rhea" id="RHEA-COMP:9666"/>
        <dbReference type="Rhea" id="RHEA-COMP:9695"/>
        <dbReference type="ChEBI" id="CHEBI:30616"/>
        <dbReference type="ChEBI" id="CHEBI:33019"/>
        <dbReference type="ChEBI" id="CHEBI:58045"/>
        <dbReference type="ChEBI" id="CHEBI:78442"/>
        <dbReference type="ChEBI" id="CHEBI:78528"/>
        <dbReference type="ChEBI" id="CHEBI:456215"/>
        <dbReference type="EC" id="6.1.1.5"/>
    </reaction>
</comment>
<comment type="subunit">
    <text evidence="1">Monomer.</text>
</comment>
<comment type="subcellular location">
    <subcellularLocation>
        <location evidence="1">Cytoplasm</location>
    </subcellularLocation>
</comment>
<comment type="domain">
    <text evidence="1">IleRS has two distinct active sites: one for aminoacylation and one for editing. The misactivated valine is translocated from the active site to the editing site, which sterically excludes the correctly activated isoleucine. The single editing site contains two valyl binding pockets, one specific for each substrate (Val-AMP or Val-tRNA(Ile)).</text>
</comment>
<comment type="similarity">
    <text evidence="1">Belongs to the class-I aminoacyl-tRNA synthetase family. IleS type 1 subfamily.</text>
</comment>
<name>SYI_CAUVC</name>
<reference key="1">
    <citation type="journal article" date="2001" name="Proc. Natl. Acad. Sci. U.S.A.">
        <title>Complete genome sequence of Caulobacter crescentus.</title>
        <authorList>
            <person name="Nierman W.C."/>
            <person name="Feldblyum T.V."/>
            <person name="Laub M.T."/>
            <person name="Paulsen I.T."/>
            <person name="Nelson K.E."/>
            <person name="Eisen J.A."/>
            <person name="Heidelberg J.F."/>
            <person name="Alley M.R.K."/>
            <person name="Ohta N."/>
            <person name="Maddock J.R."/>
            <person name="Potocka I."/>
            <person name="Nelson W.C."/>
            <person name="Newton A."/>
            <person name="Stephens C."/>
            <person name="Phadke N.D."/>
            <person name="Ely B."/>
            <person name="DeBoy R.T."/>
            <person name="Dodson R.J."/>
            <person name="Durkin A.S."/>
            <person name="Gwinn M.L."/>
            <person name="Haft D.H."/>
            <person name="Kolonay J.F."/>
            <person name="Smit J."/>
            <person name="Craven M.B."/>
            <person name="Khouri H.M."/>
            <person name="Shetty J."/>
            <person name="Berry K.J."/>
            <person name="Utterback T.R."/>
            <person name="Tran K."/>
            <person name="Wolf A.M."/>
            <person name="Vamathevan J.J."/>
            <person name="Ermolaeva M.D."/>
            <person name="White O."/>
            <person name="Salzberg S.L."/>
            <person name="Venter J.C."/>
            <person name="Shapiro L."/>
            <person name="Fraser C.M."/>
        </authorList>
    </citation>
    <scope>NUCLEOTIDE SEQUENCE [LARGE SCALE GENOMIC DNA]</scope>
    <source>
        <strain>ATCC 19089 / CIP 103742 / CB 15</strain>
    </source>
</reference>
<feature type="chain" id="PRO_0000098374" description="Isoleucine--tRNA ligase">
    <location>
        <begin position="1"/>
        <end position="969"/>
    </location>
</feature>
<feature type="short sequence motif" description="'HIGH' region">
    <location>
        <begin position="70"/>
        <end position="80"/>
    </location>
</feature>
<feature type="short sequence motif" description="'KMSKS' region">
    <location>
        <begin position="642"/>
        <end position="646"/>
    </location>
</feature>
<feature type="binding site" evidence="1">
    <location>
        <position position="601"/>
    </location>
    <ligand>
        <name>L-isoleucyl-5'-AMP</name>
        <dbReference type="ChEBI" id="CHEBI:178002"/>
    </ligand>
</feature>
<feature type="binding site" evidence="1">
    <location>
        <position position="645"/>
    </location>
    <ligand>
        <name>ATP</name>
        <dbReference type="ChEBI" id="CHEBI:30616"/>
    </ligand>
</feature>
<proteinExistence type="inferred from homology"/>
<organism>
    <name type="scientific">Caulobacter vibrioides (strain ATCC 19089 / CIP 103742 / CB 15)</name>
    <name type="common">Caulobacter crescentus</name>
    <dbReference type="NCBI Taxonomy" id="190650"/>
    <lineage>
        <taxon>Bacteria</taxon>
        <taxon>Pseudomonadati</taxon>
        <taxon>Pseudomonadota</taxon>
        <taxon>Alphaproteobacteria</taxon>
        <taxon>Caulobacterales</taxon>
        <taxon>Caulobacteraceae</taxon>
        <taxon>Caulobacter</taxon>
    </lineage>
</organism>
<keyword id="KW-0030">Aminoacyl-tRNA synthetase</keyword>
<keyword id="KW-0067">ATP-binding</keyword>
<keyword id="KW-0963">Cytoplasm</keyword>
<keyword id="KW-0436">Ligase</keyword>
<keyword id="KW-0547">Nucleotide-binding</keyword>
<keyword id="KW-0648">Protein biosynthesis</keyword>
<keyword id="KW-1185">Reference proteome</keyword>
<gene>
    <name evidence="1" type="primary">ileS</name>
    <name type="ordered locus">CC_0701</name>
</gene>
<accession>Q9AAA5</accession>
<dbReference type="EC" id="6.1.1.5" evidence="1"/>
<dbReference type="EMBL" id="AE005673">
    <property type="protein sequence ID" value="AAK22686.1"/>
    <property type="molecule type" value="Genomic_DNA"/>
</dbReference>
<dbReference type="PIR" id="B87336">
    <property type="entry name" value="B87336"/>
</dbReference>
<dbReference type="RefSeq" id="NP_419518.1">
    <property type="nucleotide sequence ID" value="NC_002696.2"/>
</dbReference>
<dbReference type="RefSeq" id="WP_010918587.1">
    <property type="nucleotide sequence ID" value="NC_002696.2"/>
</dbReference>
<dbReference type="SMR" id="Q9AAA5"/>
<dbReference type="STRING" id="190650.CC_0701"/>
<dbReference type="EnsemblBacteria" id="AAK22686">
    <property type="protein sequence ID" value="AAK22686"/>
    <property type="gene ID" value="CC_0701"/>
</dbReference>
<dbReference type="KEGG" id="ccr:CC_0701"/>
<dbReference type="PATRIC" id="fig|190650.5.peg.710"/>
<dbReference type="eggNOG" id="COG0060">
    <property type="taxonomic scope" value="Bacteria"/>
</dbReference>
<dbReference type="HOGENOM" id="CLU_001493_7_1_5"/>
<dbReference type="BioCyc" id="CAULO:CC0701-MONOMER"/>
<dbReference type="Proteomes" id="UP000001816">
    <property type="component" value="Chromosome"/>
</dbReference>
<dbReference type="GO" id="GO:0005829">
    <property type="term" value="C:cytosol"/>
    <property type="evidence" value="ECO:0007669"/>
    <property type="project" value="TreeGrafter"/>
</dbReference>
<dbReference type="GO" id="GO:0002161">
    <property type="term" value="F:aminoacyl-tRNA deacylase activity"/>
    <property type="evidence" value="ECO:0007669"/>
    <property type="project" value="InterPro"/>
</dbReference>
<dbReference type="GO" id="GO:0005524">
    <property type="term" value="F:ATP binding"/>
    <property type="evidence" value="ECO:0007669"/>
    <property type="project" value="UniProtKB-UniRule"/>
</dbReference>
<dbReference type="GO" id="GO:0004822">
    <property type="term" value="F:isoleucine-tRNA ligase activity"/>
    <property type="evidence" value="ECO:0007669"/>
    <property type="project" value="UniProtKB-UniRule"/>
</dbReference>
<dbReference type="GO" id="GO:0000049">
    <property type="term" value="F:tRNA binding"/>
    <property type="evidence" value="ECO:0007669"/>
    <property type="project" value="InterPro"/>
</dbReference>
<dbReference type="GO" id="GO:0006428">
    <property type="term" value="P:isoleucyl-tRNA aminoacylation"/>
    <property type="evidence" value="ECO:0007669"/>
    <property type="project" value="UniProtKB-UniRule"/>
</dbReference>
<dbReference type="CDD" id="cd07960">
    <property type="entry name" value="Anticodon_Ia_Ile_BEm"/>
    <property type="match status" value="1"/>
</dbReference>
<dbReference type="FunFam" id="3.40.50.620:FF:000042">
    <property type="entry name" value="Isoleucine--tRNA ligase"/>
    <property type="match status" value="1"/>
</dbReference>
<dbReference type="Gene3D" id="1.10.730.20">
    <property type="match status" value="1"/>
</dbReference>
<dbReference type="Gene3D" id="3.40.50.620">
    <property type="entry name" value="HUPs"/>
    <property type="match status" value="2"/>
</dbReference>
<dbReference type="Gene3D" id="1.10.10.830">
    <property type="entry name" value="Ile-tRNA synthetase CP2 domain-like"/>
    <property type="match status" value="1"/>
</dbReference>
<dbReference type="Gene3D" id="3.90.740.10">
    <property type="entry name" value="Valyl/Leucyl/Isoleucyl-tRNA synthetase, editing domain"/>
    <property type="match status" value="1"/>
</dbReference>
<dbReference type="HAMAP" id="MF_02002">
    <property type="entry name" value="Ile_tRNA_synth_type1"/>
    <property type="match status" value="1"/>
</dbReference>
<dbReference type="InterPro" id="IPR001412">
    <property type="entry name" value="aa-tRNA-synth_I_CS"/>
</dbReference>
<dbReference type="InterPro" id="IPR002300">
    <property type="entry name" value="aa-tRNA-synth_Ia"/>
</dbReference>
<dbReference type="InterPro" id="IPR033708">
    <property type="entry name" value="Anticodon_Ile_BEm"/>
</dbReference>
<dbReference type="InterPro" id="IPR002301">
    <property type="entry name" value="Ile-tRNA-ligase"/>
</dbReference>
<dbReference type="InterPro" id="IPR023585">
    <property type="entry name" value="Ile-tRNA-ligase_type1"/>
</dbReference>
<dbReference type="InterPro" id="IPR050081">
    <property type="entry name" value="Ile-tRNA_ligase"/>
</dbReference>
<dbReference type="InterPro" id="IPR013155">
    <property type="entry name" value="M/V/L/I-tRNA-synth_anticd-bd"/>
</dbReference>
<dbReference type="InterPro" id="IPR014729">
    <property type="entry name" value="Rossmann-like_a/b/a_fold"/>
</dbReference>
<dbReference type="InterPro" id="IPR009080">
    <property type="entry name" value="tRNAsynth_Ia_anticodon-bd"/>
</dbReference>
<dbReference type="InterPro" id="IPR009008">
    <property type="entry name" value="Val/Leu/Ile-tRNA-synth_edit"/>
</dbReference>
<dbReference type="NCBIfam" id="TIGR00392">
    <property type="entry name" value="ileS"/>
    <property type="match status" value="1"/>
</dbReference>
<dbReference type="PANTHER" id="PTHR42765:SF1">
    <property type="entry name" value="ISOLEUCINE--TRNA LIGASE, MITOCHONDRIAL"/>
    <property type="match status" value="1"/>
</dbReference>
<dbReference type="PANTHER" id="PTHR42765">
    <property type="entry name" value="SOLEUCYL-TRNA SYNTHETASE"/>
    <property type="match status" value="1"/>
</dbReference>
<dbReference type="Pfam" id="PF08264">
    <property type="entry name" value="Anticodon_1"/>
    <property type="match status" value="1"/>
</dbReference>
<dbReference type="Pfam" id="PF00133">
    <property type="entry name" value="tRNA-synt_1"/>
    <property type="match status" value="1"/>
</dbReference>
<dbReference type="PRINTS" id="PR00984">
    <property type="entry name" value="TRNASYNTHILE"/>
</dbReference>
<dbReference type="SUPFAM" id="SSF47323">
    <property type="entry name" value="Anticodon-binding domain of a subclass of class I aminoacyl-tRNA synthetases"/>
    <property type="match status" value="1"/>
</dbReference>
<dbReference type="SUPFAM" id="SSF52374">
    <property type="entry name" value="Nucleotidylyl transferase"/>
    <property type="match status" value="1"/>
</dbReference>
<dbReference type="SUPFAM" id="SSF50677">
    <property type="entry name" value="ValRS/IleRS/LeuRS editing domain"/>
    <property type="match status" value="1"/>
</dbReference>
<dbReference type="PROSITE" id="PS00178">
    <property type="entry name" value="AA_TRNA_LIGASE_I"/>
    <property type="match status" value="1"/>
</dbReference>